<feature type="chain" id="PRO_0000452440" description="Dynein axonemal assembly factor 5">
    <location>
        <begin position="1"/>
        <end position="839"/>
    </location>
</feature>
<feature type="repeat" description="HEAT 2" evidence="2">
    <location>
        <begin position="10"/>
        <end position="48"/>
    </location>
</feature>
<feature type="repeat" description="HEAT 3" evidence="2">
    <location>
        <begin position="54"/>
        <end position="92"/>
    </location>
</feature>
<feature type="repeat" description="HEAT 4" evidence="2">
    <location>
        <begin position="94"/>
        <end position="137"/>
    </location>
</feature>
<feature type="repeat" description="HEAT 5" evidence="2">
    <location>
        <begin position="140"/>
        <end position="178"/>
    </location>
</feature>
<feature type="repeat" description="HEAT 6" evidence="2">
    <location>
        <begin position="181"/>
        <end position="219"/>
    </location>
</feature>
<feature type="repeat" description="HEAT 7" evidence="2">
    <location>
        <begin position="221"/>
        <end position="257"/>
    </location>
</feature>
<feature type="repeat" description="HEAT 8" evidence="2">
    <location>
        <begin position="259"/>
        <end position="297"/>
    </location>
</feature>
<feature type="repeat" description="HEAT 9" evidence="2">
    <location>
        <begin position="578"/>
        <end position="617"/>
    </location>
</feature>
<feature type="repeat" description="HEAT 10" evidence="2">
    <location>
        <begin position="675"/>
        <end position="713"/>
    </location>
</feature>
<feature type="repeat" description="HEAT 11" evidence="2">
    <location>
        <begin position="717"/>
        <end position="755"/>
    </location>
</feature>
<feature type="repeat" description="HEAT 1" evidence="3">
    <location>
        <begin position="723"/>
        <end position="761"/>
    </location>
</feature>
<comment type="function">
    <text evidence="1">Cytoplasmic protein involved in the delivery of the dynein machinery to the motile cilium. It is required for the assembly of the axonemal dynein inner and outer arms, two structures attached to the peripheral outer doublet A microtubule of the axoneme, that play a crucial role in cilium motility.</text>
</comment>
<comment type="subunit">
    <text evidence="1">Interacts with DNAI2; probably involved in outer arm dynein assembly.</text>
</comment>
<comment type="subcellular location">
    <subcellularLocation>
        <location evidence="1">Cytoplasm</location>
    </subcellularLocation>
    <subcellularLocation>
        <location evidence="4 5">Dynein axonemal particle</location>
    </subcellularLocation>
    <text evidence="1">Observed only in the cytoplasm of ciliated cells and absent from cilia.</text>
</comment>
<comment type="similarity">
    <text evidence="6">Belongs to the DNAAF5 family.</text>
</comment>
<reference evidence="7" key="1">
    <citation type="submission" date="2006-10" db="EMBL/GenBank/DDBJ databases">
        <authorList>
            <consortium name="NIH - Xenopus Gene Collection (XGC) project"/>
        </authorList>
    </citation>
    <scope>NUCLEOTIDE SEQUENCE [LARGE SCALE MRNA]</scope>
    <source>
        <tissue evidence="7">Ovary</tissue>
    </source>
</reference>
<reference key="2">
    <citation type="journal article" date="2018" name="Elife">
        <title>A liquid-like organelle at the root of motile ciliopathy.</title>
        <authorList>
            <person name="Huizar R.L."/>
            <person name="Lee C."/>
            <person name="Boulgakov A.A."/>
            <person name="Horani A."/>
            <person name="Tu F."/>
            <person name="Marcotte E.M."/>
            <person name="Brody S.L."/>
            <person name="Wallingford J.B."/>
        </authorList>
    </citation>
    <scope>SUBCELLULAR LOCATION</scope>
</reference>
<reference key="3">
    <citation type="journal article" date="2020" name="Elife">
        <title>Functional partitioning of a liquid-like organelle during assembly of axonemal dyneins.</title>
        <authorList>
            <person name="Lee C."/>
            <person name="Cox R.M."/>
            <person name="Papoulas O."/>
            <person name="Horani A."/>
            <person name="Drew K."/>
            <person name="Devitt C.C."/>
            <person name="Brody S.L."/>
            <person name="Marcotte E.M."/>
            <person name="Wallingford J.B."/>
        </authorList>
    </citation>
    <scope>SUBCELLULAR LOCATION</scope>
</reference>
<sequence>MAAEGEQRATSDVTKALARHLNCLNDENKMIRRRALAAIQKEAADEKLASAVLQHVFLELLKPLLRCLSDPMEKCRELSIQIIVYCVSHVPRPEEALPYLMPALTQRLGQQQLVELSEELRLAMVELLTLLVEVCGKKLAPYLDEMIQIFQRTMVDPFPDVKKESCKCASNYATCIPEHFHMQAESLIKPLMQTISHQHSKVRVAVIQTTGTVIQYSSGKSVDDVLSHLAQRLFDDSVQVRQAVTVVVGDWLLKLQDRYSFFHKLIPLLLSSTTDEIPEIRKLALDYWEKIGSQWEKENEEDLKDKLDFSAPCPSYYPAGVQRPGLGCRELIFRNLSKILPAISRDVTNWVAGTRIKSSQLLAVLLLHGEDHITQHMELLLSTLYHSCLDEENQVVINSVKSAELIGTFVNPEVFLKLILSALQKSPLASHLMTLAACIRGCSREMLKTHLTKITSVISQSDVCQGSERVLYQEQLLCCIQSLIDVCQQDCTEVSLQCMNVLITILASPASESLHKKVQDTLLSLSEVQGLNGPHDLYRQHMQQLLDWVSQSHNHWTSYSVEQRQFEVIATESGPVMGETLHLFVPILKMCLQPTREPQMRLKLFTMLSKLLLKASETVNSQGQLHRYSESFINDMIVPNLKWQAGRTAGAIRTVAVSCLWVLLQSETLSQQEILQVEDNLMPRVITTLEEDSKMCRLMSCCIITALLSTCERQLRPDKLNKIYPELLKRLDDASDEVRVAAAKTLYQWFKCITDEYERTTYKGHLEFLYRGLLVHLDDPDASLQLIVLDLLKEGSAVCPSLLVQEIEAVRHKHRSPAYCDQLLHYIQKYTSPTPTECT</sequence>
<dbReference type="EMBL" id="BC126027">
    <property type="protein sequence ID" value="AAI26028.1"/>
    <property type="molecule type" value="mRNA"/>
</dbReference>
<dbReference type="RefSeq" id="NP_001090507.1">
    <property type="nucleotide sequence ID" value="NM_001097038.1"/>
</dbReference>
<dbReference type="DNASU" id="779420"/>
<dbReference type="GeneID" id="779420"/>
<dbReference type="KEGG" id="xla:779420"/>
<dbReference type="AGR" id="Xenbase:XB-GENE-5902240"/>
<dbReference type="CTD" id="779420"/>
<dbReference type="Xenbase" id="XB-GENE-5902240">
    <property type="gene designation" value="dnaaf5.L"/>
</dbReference>
<dbReference type="OrthoDB" id="413572at2759"/>
<dbReference type="Proteomes" id="UP000186698">
    <property type="component" value="Chromosome 9_10L"/>
</dbReference>
<dbReference type="Bgee" id="779420">
    <property type="expression patterns" value="Expressed in testis and 1 other cell type or tissue"/>
</dbReference>
<dbReference type="GO" id="GO:0005737">
    <property type="term" value="C:cytoplasm"/>
    <property type="evidence" value="ECO:0000318"/>
    <property type="project" value="GO_Central"/>
</dbReference>
<dbReference type="GO" id="GO:0120293">
    <property type="term" value="C:dynein axonemal particle"/>
    <property type="evidence" value="ECO:0000314"/>
    <property type="project" value="UniProtKB"/>
</dbReference>
<dbReference type="GO" id="GO:0045505">
    <property type="term" value="F:dynein intermediate chain binding"/>
    <property type="evidence" value="ECO:0000318"/>
    <property type="project" value="GO_Central"/>
</dbReference>
<dbReference type="GO" id="GO:0003341">
    <property type="term" value="P:cilium movement"/>
    <property type="evidence" value="ECO:0000318"/>
    <property type="project" value="GO_Central"/>
</dbReference>
<dbReference type="GO" id="GO:0036159">
    <property type="term" value="P:inner dynein arm assembly"/>
    <property type="evidence" value="ECO:0000318"/>
    <property type="project" value="GO_Central"/>
</dbReference>
<dbReference type="GO" id="GO:0036158">
    <property type="term" value="P:outer dynein arm assembly"/>
    <property type="evidence" value="ECO:0000318"/>
    <property type="project" value="GO_Central"/>
</dbReference>
<dbReference type="FunFam" id="1.25.10.10:FF:001106">
    <property type="entry name" value="Dynein, axonemal, assembly factor 5"/>
    <property type="match status" value="1"/>
</dbReference>
<dbReference type="FunFam" id="1.25.10.10:FF:001838">
    <property type="entry name" value="Dynein, axonemal, assembly factor 5"/>
    <property type="match status" value="1"/>
</dbReference>
<dbReference type="Gene3D" id="1.25.10.10">
    <property type="entry name" value="Leucine-rich Repeat Variant"/>
    <property type="match status" value="3"/>
</dbReference>
<dbReference type="InterPro" id="IPR011989">
    <property type="entry name" value="ARM-like"/>
</dbReference>
<dbReference type="InterPro" id="IPR016024">
    <property type="entry name" value="ARM-type_fold"/>
</dbReference>
<dbReference type="InterPro" id="IPR052623">
    <property type="entry name" value="DAAF5"/>
</dbReference>
<dbReference type="InterPro" id="IPR000357">
    <property type="entry name" value="HEAT"/>
</dbReference>
<dbReference type="InterPro" id="IPR056497">
    <property type="entry name" value="HEAT_DAAF5"/>
</dbReference>
<dbReference type="InterPro" id="IPR021133">
    <property type="entry name" value="HEAT_type_2"/>
</dbReference>
<dbReference type="PANTHER" id="PTHR16216">
    <property type="entry name" value="DYNEIN ASSEMBLY FACTOR 5, AXONEMAL"/>
    <property type="match status" value="1"/>
</dbReference>
<dbReference type="PANTHER" id="PTHR16216:SF2">
    <property type="entry name" value="DYNEIN AXONEMAL ASSEMBLY FACTOR 5"/>
    <property type="match status" value="1"/>
</dbReference>
<dbReference type="Pfam" id="PF02985">
    <property type="entry name" value="HEAT"/>
    <property type="match status" value="1"/>
</dbReference>
<dbReference type="Pfam" id="PF24573">
    <property type="entry name" value="HEAT_DAAF5"/>
    <property type="match status" value="1"/>
</dbReference>
<dbReference type="SUPFAM" id="SSF48371">
    <property type="entry name" value="ARM repeat"/>
    <property type="match status" value="1"/>
</dbReference>
<dbReference type="PROSITE" id="PS50077">
    <property type="entry name" value="HEAT_REPEAT"/>
    <property type="match status" value="1"/>
</dbReference>
<keyword id="KW-0970">Cilium biogenesis/degradation</keyword>
<keyword id="KW-0963">Cytoplasm</keyword>
<keyword id="KW-1185">Reference proteome</keyword>
<keyword id="KW-0677">Repeat</keyword>
<accession>A0JMW2</accession>
<name>DAAF5_XENLA</name>
<gene>
    <name evidence="8" type="primary">dnaaf5</name>
    <name type="synonym">heatr2</name>
</gene>
<protein>
    <recommendedName>
        <fullName evidence="6">Dynein axonemal assembly factor 5</fullName>
    </recommendedName>
    <alternativeName>
        <fullName>HEAT repeat-containing protein 2</fullName>
    </alternativeName>
</protein>
<proteinExistence type="evidence at transcript level"/>
<evidence type="ECO:0000250" key="1">
    <source>
        <dbReference type="UniProtKB" id="Q86Y56"/>
    </source>
</evidence>
<evidence type="ECO:0000255" key="2"/>
<evidence type="ECO:0000255" key="3">
    <source>
        <dbReference type="PROSITE-ProRule" id="PRU00103"/>
    </source>
</evidence>
<evidence type="ECO:0000269" key="4">
    <source>
    </source>
</evidence>
<evidence type="ECO:0000269" key="5">
    <source>
    </source>
</evidence>
<evidence type="ECO:0000305" key="6"/>
<evidence type="ECO:0000312" key="7">
    <source>
        <dbReference type="EMBL" id="AAI26028.1"/>
    </source>
</evidence>
<evidence type="ECO:0000312" key="8">
    <source>
        <dbReference type="Xenbase" id="XB-GENE-5902240"/>
    </source>
</evidence>
<organism evidence="7">
    <name type="scientific">Xenopus laevis</name>
    <name type="common">African clawed frog</name>
    <dbReference type="NCBI Taxonomy" id="8355"/>
    <lineage>
        <taxon>Eukaryota</taxon>
        <taxon>Metazoa</taxon>
        <taxon>Chordata</taxon>
        <taxon>Craniata</taxon>
        <taxon>Vertebrata</taxon>
        <taxon>Euteleostomi</taxon>
        <taxon>Amphibia</taxon>
        <taxon>Batrachia</taxon>
        <taxon>Anura</taxon>
        <taxon>Pipoidea</taxon>
        <taxon>Pipidae</taxon>
        <taxon>Xenopodinae</taxon>
        <taxon>Xenopus</taxon>
        <taxon>Xenopus</taxon>
    </lineage>
</organism>